<evidence type="ECO:0000255" key="1">
    <source>
        <dbReference type="HAMAP-Rule" id="MF_01633"/>
    </source>
</evidence>
<protein>
    <recommendedName>
        <fullName evidence="1">7-cyano-7-deazaguanine synthase</fullName>
        <ecNumber evidence="1">6.3.4.20</ecNumber>
    </recommendedName>
    <alternativeName>
        <fullName evidence="1">7-cyano-7-carbaguanine synthase</fullName>
    </alternativeName>
    <alternativeName>
        <fullName evidence="1">PreQ(0) synthase</fullName>
    </alternativeName>
    <alternativeName>
        <fullName evidence="1">Queuosine biosynthesis protein QueC</fullName>
    </alternativeName>
</protein>
<accession>Q0T7D9</accession>
<proteinExistence type="inferred from homology"/>
<sequence>MKRAVVVFSGGQDSTTCLVQALQQYDEVHCVTFDYGQQHRAEIDVARELALKLGARAHKVLDVTLLNELAVSSLTRDSIPVPDYEPEADGIPNTFVPGRNILFLTLAAIYAYQVKAEAVITGVCETDFSGYPDCRDEFVKALNHAVSLGMAKDIRFETPLMWIDKAETWALADYYGKLDLVRNETLTCYNGIKGDGCGHCAACNLRANGLNHYLADKPTVMAAMKQKTGLR</sequence>
<feature type="chain" id="PRO_1000069802" description="7-cyano-7-deazaguanine synthase">
    <location>
        <begin position="1"/>
        <end position="231"/>
    </location>
</feature>
<feature type="binding site" evidence="1">
    <location>
        <begin position="8"/>
        <end position="18"/>
    </location>
    <ligand>
        <name>ATP</name>
        <dbReference type="ChEBI" id="CHEBI:30616"/>
    </ligand>
</feature>
<feature type="binding site" evidence="1">
    <location>
        <position position="188"/>
    </location>
    <ligand>
        <name>Zn(2+)</name>
        <dbReference type="ChEBI" id="CHEBI:29105"/>
    </ligand>
</feature>
<feature type="binding site" evidence="1">
    <location>
        <position position="197"/>
    </location>
    <ligand>
        <name>Zn(2+)</name>
        <dbReference type="ChEBI" id="CHEBI:29105"/>
    </ligand>
</feature>
<feature type="binding site" evidence="1">
    <location>
        <position position="200"/>
    </location>
    <ligand>
        <name>Zn(2+)</name>
        <dbReference type="ChEBI" id="CHEBI:29105"/>
    </ligand>
</feature>
<feature type="binding site" evidence="1">
    <location>
        <position position="203"/>
    </location>
    <ligand>
        <name>Zn(2+)</name>
        <dbReference type="ChEBI" id="CHEBI:29105"/>
    </ligand>
</feature>
<keyword id="KW-0067">ATP-binding</keyword>
<keyword id="KW-0436">Ligase</keyword>
<keyword id="KW-0479">Metal-binding</keyword>
<keyword id="KW-0547">Nucleotide-binding</keyword>
<keyword id="KW-0671">Queuosine biosynthesis</keyword>
<keyword id="KW-0862">Zinc</keyword>
<name>QUEC_SHIF8</name>
<comment type="function">
    <text evidence="1">Catalyzes the ATP-dependent conversion of 7-carboxy-7-deazaguanine (CDG) to 7-cyano-7-deazaguanine (preQ(0)).</text>
</comment>
<comment type="catalytic activity">
    <reaction evidence="1">
        <text>7-carboxy-7-deazaguanine + NH4(+) + ATP = 7-cyano-7-deazaguanine + ADP + phosphate + H2O + H(+)</text>
        <dbReference type="Rhea" id="RHEA:27982"/>
        <dbReference type="ChEBI" id="CHEBI:15377"/>
        <dbReference type="ChEBI" id="CHEBI:15378"/>
        <dbReference type="ChEBI" id="CHEBI:28938"/>
        <dbReference type="ChEBI" id="CHEBI:30616"/>
        <dbReference type="ChEBI" id="CHEBI:43474"/>
        <dbReference type="ChEBI" id="CHEBI:45075"/>
        <dbReference type="ChEBI" id="CHEBI:61036"/>
        <dbReference type="ChEBI" id="CHEBI:456216"/>
        <dbReference type="EC" id="6.3.4.20"/>
    </reaction>
</comment>
<comment type="cofactor">
    <cofactor evidence="1">
        <name>Zn(2+)</name>
        <dbReference type="ChEBI" id="CHEBI:29105"/>
    </cofactor>
    <text evidence="1">Binds 1 zinc ion per subunit.</text>
</comment>
<comment type="pathway">
    <text evidence="1">Purine metabolism; 7-cyano-7-deazaguanine biosynthesis.</text>
</comment>
<comment type="similarity">
    <text evidence="1">Belongs to the QueC family.</text>
</comment>
<dbReference type="EC" id="6.3.4.20" evidence="1"/>
<dbReference type="EMBL" id="CP000266">
    <property type="protein sequence ID" value="ABF02687.1"/>
    <property type="molecule type" value="Genomic_DNA"/>
</dbReference>
<dbReference type="RefSeq" id="WP_000817216.1">
    <property type="nucleotide sequence ID" value="NC_008258.1"/>
</dbReference>
<dbReference type="SMR" id="Q0T7D9"/>
<dbReference type="KEGG" id="sfv:SFV_0418"/>
<dbReference type="HOGENOM" id="CLU_081854_0_0_6"/>
<dbReference type="UniPathway" id="UPA00391"/>
<dbReference type="Proteomes" id="UP000000659">
    <property type="component" value="Chromosome"/>
</dbReference>
<dbReference type="GO" id="GO:0005524">
    <property type="term" value="F:ATP binding"/>
    <property type="evidence" value="ECO:0007669"/>
    <property type="project" value="UniProtKB-UniRule"/>
</dbReference>
<dbReference type="GO" id="GO:0016879">
    <property type="term" value="F:ligase activity, forming carbon-nitrogen bonds"/>
    <property type="evidence" value="ECO:0007669"/>
    <property type="project" value="UniProtKB-UniRule"/>
</dbReference>
<dbReference type="GO" id="GO:0008270">
    <property type="term" value="F:zinc ion binding"/>
    <property type="evidence" value="ECO:0007669"/>
    <property type="project" value="UniProtKB-UniRule"/>
</dbReference>
<dbReference type="GO" id="GO:0008616">
    <property type="term" value="P:queuosine biosynthetic process"/>
    <property type="evidence" value="ECO:0007669"/>
    <property type="project" value="UniProtKB-UniRule"/>
</dbReference>
<dbReference type="CDD" id="cd01995">
    <property type="entry name" value="QueC-like"/>
    <property type="match status" value="1"/>
</dbReference>
<dbReference type="FunFam" id="3.40.50.620:FF:000017">
    <property type="entry name" value="7-cyano-7-deazaguanine synthase"/>
    <property type="match status" value="1"/>
</dbReference>
<dbReference type="Gene3D" id="3.40.50.620">
    <property type="entry name" value="HUPs"/>
    <property type="match status" value="1"/>
</dbReference>
<dbReference type="HAMAP" id="MF_01633">
    <property type="entry name" value="QueC"/>
    <property type="match status" value="1"/>
</dbReference>
<dbReference type="InterPro" id="IPR018317">
    <property type="entry name" value="QueC"/>
</dbReference>
<dbReference type="InterPro" id="IPR014729">
    <property type="entry name" value="Rossmann-like_a/b/a_fold"/>
</dbReference>
<dbReference type="NCBIfam" id="TIGR00364">
    <property type="entry name" value="7-cyano-7-deazaguanine synthase QueC"/>
    <property type="match status" value="1"/>
</dbReference>
<dbReference type="NCBIfam" id="NF008317">
    <property type="entry name" value="PRK11106.1"/>
    <property type="match status" value="1"/>
</dbReference>
<dbReference type="PANTHER" id="PTHR42914">
    <property type="entry name" value="7-CYANO-7-DEAZAGUANINE SYNTHASE"/>
    <property type="match status" value="1"/>
</dbReference>
<dbReference type="PANTHER" id="PTHR42914:SF1">
    <property type="entry name" value="7-CYANO-7-DEAZAGUANINE SYNTHASE"/>
    <property type="match status" value="1"/>
</dbReference>
<dbReference type="Pfam" id="PF06508">
    <property type="entry name" value="QueC"/>
    <property type="match status" value="1"/>
</dbReference>
<dbReference type="PIRSF" id="PIRSF006293">
    <property type="entry name" value="ExsB"/>
    <property type="match status" value="1"/>
</dbReference>
<dbReference type="SUPFAM" id="SSF52402">
    <property type="entry name" value="Adenine nucleotide alpha hydrolases-like"/>
    <property type="match status" value="1"/>
</dbReference>
<gene>
    <name evidence="1" type="primary">queC</name>
    <name type="ordered locus">SFV_0418</name>
</gene>
<organism>
    <name type="scientific">Shigella flexneri serotype 5b (strain 8401)</name>
    <dbReference type="NCBI Taxonomy" id="373384"/>
    <lineage>
        <taxon>Bacteria</taxon>
        <taxon>Pseudomonadati</taxon>
        <taxon>Pseudomonadota</taxon>
        <taxon>Gammaproteobacteria</taxon>
        <taxon>Enterobacterales</taxon>
        <taxon>Enterobacteriaceae</taxon>
        <taxon>Shigella</taxon>
    </lineage>
</organism>
<reference key="1">
    <citation type="journal article" date="2006" name="BMC Genomics">
        <title>Complete genome sequence of Shigella flexneri 5b and comparison with Shigella flexneri 2a.</title>
        <authorList>
            <person name="Nie H."/>
            <person name="Yang F."/>
            <person name="Zhang X."/>
            <person name="Yang J."/>
            <person name="Chen L."/>
            <person name="Wang J."/>
            <person name="Xiong Z."/>
            <person name="Peng J."/>
            <person name="Sun L."/>
            <person name="Dong J."/>
            <person name="Xue Y."/>
            <person name="Xu X."/>
            <person name="Chen S."/>
            <person name="Yao Z."/>
            <person name="Shen Y."/>
            <person name="Jin Q."/>
        </authorList>
    </citation>
    <scope>NUCLEOTIDE SEQUENCE [LARGE SCALE GENOMIC DNA]</scope>
    <source>
        <strain>8401</strain>
    </source>
</reference>